<feature type="chain" id="PRO_1000132439" description="Glycine dehydrogenase (decarboxylating)">
    <location>
        <begin position="1"/>
        <end position="957"/>
    </location>
</feature>
<feature type="modified residue" description="N6-(pyridoxal phosphate)lysine" evidence="1">
    <location>
        <position position="708"/>
    </location>
</feature>
<dbReference type="EC" id="1.4.4.2" evidence="1"/>
<dbReference type="EMBL" id="CU928163">
    <property type="protein sequence ID" value="CAR14408.1"/>
    <property type="molecule type" value="Genomic_DNA"/>
</dbReference>
<dbReference type="RefSeq" id="WP_000195045.1">
    <property type="nucleotide sequence ID" value="NC_011751.1"/>
</dbReference>
<dbReference type="RefSeq" id="YP_002413927.1">
    <property type="nucleotide sequence ID" value="NC_011751.1"/>
</dbReference>
<dbReference type="SMR" id="B7N7E6"/>
<dbReference type="STRING" id="585056.ECUMN_3244"/>
<dbReference type="KEGG" id="eum:ECUMN_3244"/>
<dbReference type="PATRIC" id="fig|585056.7.peg.3421"/>
<dbReference type="HOGENOM" id="CLU_004620_1_1_6"/>
<dbReference type="Proteomes" id="UP000007097">
    <property type="component" value="Chromosome"/>
</dbReference>
<dbReference type="GO" id="GO:0005829">
    <property type="term" value="C:cytosol"/>
    <property type="evidence" value="ECO:0007669"/>
    <property type="project" value="TreeGrafter"/>
</dbReference>
<dbReference type="GO" id="GO:0005960">
    <property type="term" value="C:glycine cleavage complex"/>
    <property type="evidence" value="ECO:0007669"/>
    <property type="project" value="TreeGrafter"/>
</dbReference>
<dbReference type="GO" id="GO:0016594">
    <property type="term" value="F:glycine binding"/>
    <property type="evidence" value="ECO:0007669"/>
    <property type="project" value="TreeGrafter"/>
</dbReference>
<dbReference type="GO" id="GO:0004375">
    <property type="term" value="F:glycine dehydrogenase (decarboxylating) activity"/>
    <property type="evidence" value="ECO:0007669"/>
    <property type="project" value="UniProtKB-EC"/>
</dbReference>
<dbReference type="GO" id="GO:0030170">
    <property type="term" value="F:pyridoxal phosphate binding"/>
    <property type="evidence" value="ECO:0007669"/>
    <property type="project" value="TreeGrafter"/>
</dbReference>
<dbReference type="GO" id="GO:0019464">
    <property type="term" value="P:glycine decarboxylation via glycine cleavage system"/>
    <property type="evidence" value="ECO:0007669"/>
    <property type="project" value="UniProtKB-UniRule"/>
</dbReference>
<dbReference type="CDD" id="cd00613">
    <property type="entry name" value="GDC-P"/>
    <property type="match status" value="2"/>
</dbReference>
<dbReference type="FunFam" id="3.40.640.10:FF:000005">
    <property type="entry name" value="Glycine dehydrogenase (decarboxylating), mitochondrial"/>
    <property type="match status" value="1"/>
</dbReference>
<dbReference type="FunFam" id="3.90.1150.10:FF:000007">
    <property type="entry name" value="Glycine dehydrogenase (decarboxylating), mitochondrial"/>
    <property type="match status" value="1"/>
</dbReference>
<dbReference type="FunFam" id="3.40.640.10:FF:000007">
    <property type="entry name" value="glycine dehydrogenase (Decarboxylating), mitochondrial"/>
    <property type="match status" value="1"/>
</dbReference>
<dbReference type="Gene3D" id="3.90.1150.10">
    <property type="entry name" value="Aspartate Aminotransferase, domain 1"/>
    <property type="match status" value="1"/>
</dbReference>
<dbReference type="Gene3D" id="3.40.640.10">
    <property type="entry name" value="Type I PLP-dependent aspartate aminotransferase-like (Major domain)"/>
    <property type="match status" value="2"/>
</dbReference>
<dbReference type="HAMAP" id="MF_00711">
    <property type="entry name" value="GcvP"/>
    <property type="match status" value="1"/>
</dbReference>
<dbReference type="InterPro" id="IPR003437">
    <property type="entry name" value="GcvP"/>
</dbReference>
<dbReference type="InterPro" id="IPR049316">
    <property type="entry name" value="GDC-P_C"/>
</dbReference>
<dbReference type="InterPro" id="IPR049315">
    <property type="entry name" value="GDC-P_N"/>
</dbReference>
<dbReference type="InterPro" id="IPR020581">
    <property type="entry name" value="GDC_P"/>
</dbReference>
<dbReference type="InterPro" id="IPR015424">
    <property type="entry name" value="PyrdxlP-dep_Trfase"/>
</dbReference>
<dbReference type="InterPro" id="IPR015421">
    <property type="entry name" value="PyrdxlP-dep_Trfase_major"/>
</dbReference>
<dbReference type="InterPro" id="IPR015422">
    <property type="entry name" value="PyrdxlP-dep_Trfase_small"/>
</dbReference>
<dbReference type="NCBIfam" id="TIGR00461">
    <property type="entry name" value="gcvP"/>
    <property type="match status" value="1"/>
</dbReference>
<dbReference type="NCBIfam" id="NF003346">
    <property type="entry name" value="PRK04366.1"/>
    <property type="match status" value="1"/>
</dbReference>
<dbReference type="PANTHER" id="PTHR11773:SF13">
    <property type="entry name" value="GLYCINE DEHYDROGENASE (DECARBOXYLATING)"/>
    <property type="match status" value="1"/>
</dbReference>
<dbReference type="PANTHER" id="PTHR11773">
    <property type="entry name" value="GLYCINE DEHYDROGENASE, DECARBOXYLATING"/>
    <property type="match status" value="1"/>
</dbReference>
<dbReference type="Pfam" id="PF21478">
    <property type="entry name" value="GcvP2_C"/>
    <property type="match status" value="1"/>
</dbReference>
<dbReference type="Pfam" id="PF02347">
    <property type="entry name" value="GDC-P"/>
    <property type="match status" value="2"/>
</dbReference>
<dbReference type="SUPFAM" id="SSF53383">
    <property type="entry name" value="PLP-dependent transferases"/>
    <property type="match status" value="2"/>
</dbReference>
<comment type="function">
    <text evidence="1">The glycine cleavage system catalyzes the degradation of glycine. The P protein binds the alpha-amino group of glycine through its pyridoxal phosphate cofactor; CO(2) is released and the remaining methylamine moiety is then transferred to the lipoamide cofactor of the H protein.</text>
</comment>
<comment type="catalytic activity">
    <reaction evidence="1">
        <text>N(6)-[(R)-lipoyl]-L-lysyl-[glycine-cleavage complex H protein] + glycine + H(+) = N(6)-[(R)-S(8)-aminomethyldihydrolipoyl]-L-lysyl-[glycine-cleavage complex H protein] + CO2</text>
        <dbReference type="Rhea" id="RHEA:24304"/>
        <dbReference type="Rhea" id="RHEA-COMP:10494"/>
        <dbReference type="Rhea" id="RHEA-COMP:10495"/>
        <dbReference type="ChEBI" id="CHEBI:15378"/>
        <dbReference type="ChEBI" id="CHEBI:16526"/>
        <dbReference type="ChEBI" id="CHEBI:57305"/>
        <dbReference type="ChEBI" id="CHEBI:83099"/>
        <dbReference type="ChEBI" id="CHEBI:83143"/>
        <dbReference type="EC" id="1.4.4.2"/>
    </reaction>
</comment>
<comment type="cofactor">
    <cofactor evidence="1">
        <name>pyridoxal 5'-phosphate</name>
        <dbReference type="ChEBI" id="CHEBI:597326"/>
    </cofactor>
</comment>
<comment type="subunit">
    <text evidence="1">The glycine cleavage system is composed of four proteins: P, T, L and H.</text>
</comment>
<comment type="similarity">
    <text evidence="1">Belongs to the GcvP family.</text>
</comment>
<proteinExistence type="inferred from homology"/>
<name>GCSP_ECOLU</name>
<gene>
    <name evidence="1" type="primary">gcvP</name>
    <name type="ordered locus">ECUMN_3244</name>
</gene>
<sequence length="957" mass="104279">MTQTLSQLENSGAFIERHIGPDAAQQQEMLNAVGAQSLNALTGQIVPKDIQLATPPQVGAPATEYAALAELKAIASRNKRFTSYIGMGYTAVQLPPVILRNMLENPGWYTAYTPYQPEVSQGRLEALLNFQQVTLDLTGLDMASASLLDEATAAAEAMAMAKRVSKLKNANRFFVASDVHPQTLDVVRTRAETFGFEVIVDDAQKVLDHQDVFGVLLQQVGTTGEIHDYTALISELKSRKIVVSVAADIMALVLLTAPGKQGADIVFGSAQRFGVPMGYGGPHAAFFAAKDEYKRSMPGRIIGVSKDAAGNTALRMAMQTREQHIRREKANSNICTSQVLLANIASLYAVYHGPVGLKRIANRIHRLTDILAAGLQQKGLKLRHAHYFDTLCVEVADKAGVLARAEAAEINLRSDILNAVGITLDETTTRENVMQLFSVLLGDNHGLDIDTLDKDVAHDSRSIQPAMLRDDEILTHPVFNRYHSETEMMRYMHSLERKDLALNQAMIPLGSCTMKLNAAAEMIPITWSEFAELHPFCPPEQAEGYQQMIAQLADWLVKLTGYDAVCMQPNSGAQGEYAGLLAIRHYHESRNEGHRDICLIPASAHGTNPASAHMAGMQVVVVACDKNGNIDLADLRAKAEQAGDNLSCIMVTYPSTHGVYEETIREVCEVVHQFGGQVYLDGANMNAQVGITSPGFIGADVSHLNLHKTFCIPHGGGGPGMGPIGVKAHLAPFVPGHSVVQIEGMLTRQGAVSAAPFGSASILPISWMYIRMMGAEGLKKASQVAILNANYIASRLQDAFPVLYTGRDGRVAHECILDIRPLKEETGISELDIAKRLIDYGFHAPTMSFPVAGTLMVEPTESESKVELDRFIDAMLAIRAEIDQVKAGVWPLEDNPLVNAPHIQSELVAEWAHPYSREVAVFPAGVADKYWPTVKRLDDVYGDRNLFCSCVPISEYQ</sequence>
<reference key="1">
    <citation type="journal article" date="2009" name="PLoS Genet.">
        <title>Organised genome dynamics in the Escherichia coli species results in highly diverse adaptive paths.</title>
        <authorList>
            <person name="Touchon M."/>
            <person name="Hoede C."/>
            <person name="Tenaillon O."/>
            <person name="Barbe V."/>
            <person name="Baeriswyl S."/>
            <person name="Bidet P."/>
            <person name="Bingen E."/>
            <person name="Bonacorsi S."/>
            <person name="Bouchier C."/>
            <person name="Bouvet O."/>
            <person name="Calteau A."/>
            <person name="Chiapello H."/>
            <person name="Clermont O."/>
            <person name="Cruveiller S."/>
            <person name="Danchin A."/>
            <person name="Diard M."/>
            <person name="Dossat C."/>
            <person name="Karoui M.E."/>
            <person name="Frapy E."/>
            <person name="Garry L."/>
            <person name="Ghigo J.M."/>
            <person name="Gilles A.M."/>
            <person name="Johnson J."/>
            <person name="Le Bouguenec C."/>
            <person name="Lescat M."/>
            <person name="Mangenot S."/>
            <person name="Martinez-Jehanne V."/>
            <person name="Matic I."/>
            <person name="Nassif X."/>
            <person name="Oztas S."/>
            <person name="Petit M.A."/>
            <person name="Pichon C."/>
            <person name="Rouy Z."/>
            <person name="Ruf C.S."/>
            <person name="Schneider D."/>
            <person name="Tourret J."/>
            <person name="Vacherie B."/>
            <person name="Vallenet D."/>
            <person name="Medigue C."/>
            <person name="Rocha E.P.C."/>
            <person name="Denamur E."/>
        </authorList>
    </citation>
    <scope>NUCLEOTIDE SEQUENCE [LARGE SCALE GENOMIC DNA]</scope>
    <source>
        <strain>UMN026 / ExPEC</strain>
    </source>
</reference>
<protein>
    <recommendedName>
        <fullName evidence="1">Glycine dehydrogenase (decarboxylating)</fullName>
        <ecNumber evidence="1">1.4.4.2</ecNumber>
    </recommendedName>
    <alternativeName>
        <fullName evidence="1">Glycine cleavage system P-protein</fullName>
    </alternativeName>
    <alternativeName>
        <fullName evidence="1">Glycine decarboxylase</fullName>
    </alternativeName>
    <alternativeName>
        <fullName evidence="1">Glycine dehydrogenase (aminomethyl-transferring)</fullName>
    </alternativeName>
</protein>
<organism>
    <name type="scientific">Escherichia coli O17:K52:H18 (strain UMN026 / ExPEC)</name>
    <dbReference type="NCBI Taxonomy" id="585056"/>
    <lineage>
        <taxon>Bacteria</taxon>
        <taxon>Pseudomonadati</taxon>
        <taxon>Pseudomonadota</taxon>
        <taxon>Gammaproteobacteria</taxon>
        <taxon>Enterobacterales</taxon>
        <taxon>Enterobacteriaceae</taxon>
        <taxon>Escherichia</taxon>
    </lineage>
</organism>
<keyword id="KW-0560">Oxidoreductase</keyword>
<keyword id="KW-0663">Pyridoxal phosphate</keyword>
<accession>B7N7E6</accession>
<evidence type="ECO:0000255" key="1">
    <source>
        <dbReference type="HAMAP-Rule" id="MF_00711"/>
    </source>
</evidence>